<sequence length="101" mass="10896">MVSLSDYLILSSVIFCIGLVGIFVNRTNIITLLMCVELILVAVNTNFVAFSHFLGNEVGQIFVFFILTVAAAEVAIGLAILTLLFRNRGSISVDVTNSLKG</sequence>
<feature type="chain" id="PRO_0000390214" description="NADH-quinone oxidoreductase subunit K">
    <location>
        <begin position="1"/>
        <end position="101"/>
    </location>
</feature>
<feature type="transmembrane region" description="Helical" evidence="1">
    <location>
        <begin position="4"/>
        <end position="24"/>
    </location>
</feature>
<feature type="transmembrane region" description="Helical" evidence="1">
    <location>
        <begin position="29"/>
        <end position="49"/>
    </location>
</feature>
<feature type="transmembrane region" description="Helical" evidence="1">
    <location>
        <begin position="61"/>
        <end position="81"/>
    </location>
</feature>
<organism>
    <name type="scientific">Ruthia magnifica subsp. Calyptogena magnifica</name>
    <dbReference type="NCBI Taxonomy" id="413404"/>
    <lineage>
        <taxon>Bacteria</taxon>
        <taxon>Pseudomonadati</taxon>
        <taxon>Pseudomonadota</taxon>
        <taxon>Gammaproteobacteria</taxon>
        <taxon>Candidatus Pseudothioglobaceae</taxon>
        <taxon>Candidatus Ruthturnera</taxon>
    </lineage>
</organism>
<reference key="1">
    <citation type="journal article" date="2007" name="Science">
        <title>The Calyptogena magnifica chemoautotrophic symbiont genome.</title>
        <authorList>
            <person name="Newton I.L.G."/>
            <person name="Woyke T."/>
            <person name="Auchtung T.A."/>
            <person name="Dilly G.F."/>
            <person name="Dutton R.J."/>
            <person name="Fisher M.C."/>
            <person name="Fontanez K.M."/>
            <person name="Lau E."/>
            <person name="Stewart F.J."/>
            <person name="Richardson P.M."/>
            <person name="Barry K.W."/>
            <person name="Saunders E."/>
            <person name="Detter J.C."/>
            <person name="Wu D."/>
            <person name="Eisen J.A."/>
            <person name="Cavanaugh C.M."/>
        </authorList>
    </citation>
    <scope>NUCLEOTIDE SEQUENCE [LARGE SCALE GENOMIC DNA]</scope>
</reference>
<proteinExistence type="inferred from homology"/>
<accession>A1AVS2</accession>
<comment type="function">
    <text evidence="1">NDH-1 shuttles electrons from NADH, via FMN and iron-sulfur (Fe-S) centers, to quinones in the respiratory chain. The immediate electron acceptor for the enzyme in this species is believed to be ubiquinone. Couples the redox reaction to proton translocation (for every two electrons transferred, four hydrogen ions are translocated across the cytoplasmic membrane), and thus conserves the redox energy in a proton gradient.</text>
</comment>
<comment type="catalytic activity">
    <reaction evidence="1">
        <text>a quinone + NADH + 5 H(+)(in) = a quinol + NAD(+) + 4 H(+)(out)</text>
        <dbReference type="Rhea" id="RHEA:57888"/>
        <dbReference type="ChEBI" id="CHEBI:15378"/>
        <dbReference type="ChEBI" id="CHEBI:24646"/>
        <dbReference type="ChEBI" id="CHEBI:57540"/>
        <dbReference type="ChEBI" id="CHEBI:57945"/>
        <dbReference type="ChEBI" id="CHEBI:132124"/>
    </reaction>
</comment>
<comment type="subunit">
    <text evidence="1">NDH-1 is composed of 14 different subunits. Subunits NuoA, H, J, K, L, M, N constitute the membrane sector of the complex.</text>
</comment>
<comment type="subcellular location">
    <subcellularLocation>
        <location evidence="1">Cell inner membrane</location>
        <topology evidence="1">Multi-pass membrane protein</topology>
    </subcellularLocation>
</comment>
<comment type="similarity">
    <text evidence="1">Belongs to the complex I subunit 4L family.</text>
</comment>
<dbReference type="EC" id="7.1.1.-" evidence="1"/>
<dbReference type="EMBL" id="CP000488">
    <property type="protein sequence ID" value="ABL02029.1"/>
    <property type="molecule type" value="Genomic_DNA"/>
</dbReference>
<dbReference type="RefSeq" id="WP_011737654.1">
    <property type="nucleotide sequence ID" value="NC_008610.1"/>
</dbReference>
<dbReference type="SMR" id="A1AVS2"/>
<dbReference type="STRING" id="413404.Rmag_0247"/>
<dbReference type="KEGG" id="rma:Rmag_0247"/>
<dbReference type="eggNOG" id="COG0713">
    <property type="taxonomic scope" value="Bacteria"/>
</dbReference>
<dbReference type="HOGENOM" id="CLU_144724_2_0_6"/>
<dbReference type="OrthoDB" id="9801357at2"/>
<dbReference type="Proteomes" id="UP000002587">
    <property type="component" value="Chromosome"/>
</dbReference>
<dbReference type="GO" id="GO:0030964">
    <property type="term" value="C:NADH dehydrogenase complex"/>
    <property type="evidence" value="ECO:0007669"/>
    <property type="project" value="TreeGrafter"/>
</dbReference>
<dbReference type="GO" id="GO:0005886">
    <property type="term" value="C:plasma membrane"/>
    <property type="evidence" value="ECO:0007669"/>
    <property type="project" value="UniProtKB-SubCell"/>
</dbReference>
<dbReference type="GO" id="GO:0050136">
    <property type="term" value="F:NADH:ubiquinone reductase (non-electrogenic) activity"/>
    <property type="evidence" value="ECO:0007669"/>
    <property type="project" value="UniProtKB-UniRule"/>
</dbReference>
<dbReference type="GO" id="GO:0048038">
    <property type="term" value="F:quinone binding"/>
    <property type="evidence" value="ECO:0007669"/>
    <property type="project" value="UniProtKB-KW"/>
</dbReference>
<dbReference type="GO" id="GO:0042773">
    <property type="term" value="P:ATP synthesis coupled electron transport"/>
    <property type="evidence" value="ECO:0007669"/>
    <property type="project" value="InterPro"/>
</dbReference>
<dbReference type="FunFam" id="1.10.287.3510:FF:000001">
    <property type="entry name" value="NADH-quinone oxidoreductase subunit K"/>
    <property type="match status" value="1"/>
</dbReference>
<dbReference type="Gene3D" id="1.10.287.3510">
    <property type="match status" value="1"/>
</dbReference>
<dbReference type="HAMAP" id="MF_01456">
    <property type="entry name" value="NDH1_NuoK"/>
    <property type="match status" value="1"/>
</dbReference>
<dbReference type="InterPro" id="IPR001133">
    <property type="entry name" value="NADH_UbQ_OxRdtase_chain4L/K"/>
</dbReference>
<dbReference type="InterPro" id="IPR039428">
    <property type="entry name" value="NUOK/Mnh_C1-like"/>
</dbReference>
<dbReference type="NCBIfam" id="NF004320">
    <property type="entry name" value="PRK05715.1-2"/>
    <property type="match status" value="1"/>
</dbReference>
<dbReference type="NCBIfam" id="NF004321">
    <property type="entry name" value="PRK05715.1-3"/>
    <property type="match status" value="1"/>
</dbReference>
<dbReference type="NCBIfam" id="NF004323">
    <property type="entry name" value="PRK05715.1-5"/>
    <property type="match status" value="1"/>
</dbReference>
<dbReference type="PANTHER" id="PTHR11434:SF21">
    <property type="entry name" value="NADH DEHYDROGENASE SUBUNIT 4L-RELATED"/>
    <property type="match status" value="1"/>
</dbReference>
<dbReference type="PANTHER" id="PTHR11434">
    <property type="entry name" value="NADH-UBIQUINONE OXIDOREDUCTASE SUBUNIT ND4L"/>
    <property type="match status" value="1"/>
</dbReference>
<dbReference type="Pfam" id="PF00420">
    <property type="entry name" value="Oxidored_q2"/>
    <property type="match status" value="1"/>
</dbReference>
<protein>
    <recommendedName>
        <fullName evidence="1">NADH-quinone oxidoreductase subunit K</fullName>
        <ecNumber evidence="1">7.1.1.-</ecNumber>
    </recommendedName>
    <alternativeName>
        <fullName evidence="1">NADH dehydrogenase I subunit K</fullName>
    </alternativeName>
    <alternativeName>
        <fullName evidence="1">NDH-1 subunit K</fullName>
    </alternativeName>
</protein>
<gene>
    <name evidence="1" type="primary">nuoK</name>
    <name type="ordered locus">Rmag_0247</name>
</gene>
<evidence type="ECO:0000255" key="1">
    <source>
        <dbReference type="HAMAP-Rule" id="MF_01456"/>
    </source>
</evidence>
<keyword id="KW-0997">Cell inner membrane</keyword>
<keyword id="KW-1003">Cell membrane</keyword>
<keyword id="KW-0472">Membrane</keyword>
<keyword id="KW-0520">NAD</keyword>
<keyword id="KW-0874">Quinone</keyword>
<keyword id="KW-1278">Translocase</keyword>
<keyword id="KW-0812">Transmembrane</keyword>
<keyword id="KW-1133">Transmembrane helix</keyword>
<keyword id="KW-0813">Transport</keyword>
<keyword id="KW-0830">Ubiquinone</keyword>
<name>NUOK_RUTMC</name>